<accession>E9Q9M8</accession>
<sequence>MEPRAGCRLPVRVEQVVNGALVVTVSCGERSFAGILLDCTKKSGLFGLSPSTLLPLADNSSAVSCHGQAPEEGTGEVMQLETGPLHPHHKDPEKDQPPKTAVSEPPPPLIPPVPAGNLPPFPPYFEGAPFPHPLWLRNTYQQWVPQPPPRTIKRTRRRLSRNRDPGRLILSTIRLRPRQVLCEKCKSTVSPQEASPSPLNTPKPRRRLGSGPDSEHRKPEEPEDSAVIATAAPRRSKREKREEDRVAGERVPRSPVIKISYSTPQGKGEVVKIPSRVHGSVEPFCPQQSLQNGSQDSEVSRDVEPRGGGDRPPSGSSASIPKLKLTRPVPPISDLPPPKIRLKPHRLGDGEHEPLYRAELVEELNGCPRGPLVSSPALFADGSSHGLEDLSSGSSGEDDDLKRFPQGKHGRDGLAFLVDCPGRRTDCTSESVCSTDSLDELKSSGSEVTSPDTGDLSSGDSASVPSSSADTRQTVPPLTVRLHTQSVSRCVTEDGRTVAVGDIVWGKIHGFPWWPARVLDISLGQKEDGEPSWQEAKVSWFGSPTTSFLSISKLSPFSEFFKLRFNRKKKGMYRKAITEAANATQHVAPEIRELLTQFEM</sequence>
<evidence type="ECO:0000250" key="1">
    <source>
        <dbReference type="UniProtKB" id="Q6NUJ5"/>
    </source>
</evidence>
<evidence type="ECO:0000255" key="2">
    <source>
        <dbReference type="PROSITE-ProRule" id="PRU00162"/>
    </source>
</evidence>
<evidence type="ECO:0000256" key="3">
    <source>
        <dbReference type="SAM" id="MobiDB-lite"/>
    </source>
</evidence>
<evidence type="ECO:0000269" key="4">
    <source>
    </source>
</evidence>
<evidence type="ECO:0000269" key="5">
    <source>
    </source>
</evidence>
<gene>
    <name type="primary">Pwwp2b</name>
    <name type="synonym">Pwwp2</name>
</gene>
<name>PWP2B_MOUSE</name>
<feature type="chain" id="PRO_0000454860" description="PWWP domain-containing protein 2B">
    <location>
        <begin position="1"/>
        <end position="600"/>
    </location>
</feature>
<feature type="domain" description="PWWP" evidence="2">
    <location>
        <begin position="500"/>
        <end position="560"/>
    </location>
</feature>
<feature type="region of interest" description="Disordered" evidence="3">
    <location>
        <begin position="81"/>
        <end position="115"/>
    </location>
</feature>
<feature type="region of interest" description="Disordered" evidence="3">
    <location>
        <begin position="143"/>
        <end position="171"/>
    </location>
</feature>
<feature type="region of interest" description="Disordered" evidence="3">
    <location>
        <begin position="186"/>
        <end position="350"/>
    </location>
</feature>
<feature type="region of interest" description="Disordered" evidence="3">
    <location>
        <begin position="366"/>
        <end position="408"/>
    </location>
</feature>
<feature type="region of interest" description="Disordered" evidence="3">
    <location>
        <begin position="426"/>
        <end position="477"/>
    </location>
</feature>
<feature type="compositionally biased region" description="Pro residues" evidence="3">
    <location>
        <begin position="104"/>
        <end position="115"/>
    </location>
</feature>
<feature type="compositionally biased region" description="Basic residues" evidence="3">
    <location>
        <begin position="151"/>
        <end position="160"/>
    </location>
</feature>
<feature type="compositionally biased region" description="Polar residues" evidence="3">
    <location>
        <begin position="187"/>
        <end position="200"/>
    </location>
</feature>
<feature type="compositionally biased region" description="Basic and acidic residues" evidence="3">
    <location>
        <begin position="239"/>
        <end position="252"/>
    </location>
</feature>
<feature type="compositionally biased region" description="Polar residues" evidence="3">
    <location>
        <begin position="286"/>
        <end position="297"/>
    </location>
</feature>
<feature type="compositionally biased region" description="Basic and acidic residues" evidence="3">
    <location>
        <begin position="298"/>
        <end position="309"/>
    </location>
</feature>
<feature type="compositionally biased region" description="Pro residues" evidence="3">
    <location>
        <begin position="328"/>
        <end position="339"/>
    </location>
</feature>
<feature type="compositionally biased region" description="Low complexity" evidence="3">
    <location>
        <begin position="381"/>
        <end position="395"/>
    </location>
</feature>
<feature type="compositionally biased region" description="Polar residues" evidence="3">
    <location>
        <begin position="443"/>
        <end position="456"/>
    </location>
</feature>
<feature type="compositionally biased region" description="Low complexity" evidence="3">
    <location>
        <begin position="457"/>
        <end position="468"/>
    </location>
</feature>
<feature type="modified residue" description="Phosphoserine" evidence="1">
    <location>
        <position position="190"/>
    </location>
</feature>
<feature type="modified residue" description="Phosphoserine" evidence="1">
    <location>
        <position position="210"/>
    </location>
</feature>
<feature type="modified residue" description="Phosphoserine" evidence="1">
    <location>
        <position position="254"/>
    </location>
</feature>
<feature type="modified residue" description="Phosphoserine" evidence="1">
    <location>
        <position position="457"/>
    </location>
</feature>
<proteinExistence type="evidence at protein level"/>
<comment type="function">
    <text evidence="1 4 5">Chromatin-binding protein that acts as an adapter between distinct nucleosome components (H3K36me3 or H2A.Z) and chromatin-modifying complexes, contributing to the regulation of the levels of histone acetylation at actively transcribed genes (PubMed:30228260). Competes with CHD4 and MBD3 for interaction with MTA1 to form a NuRD subcomplex, preventing the formation of full NuRD complex (containing CHD4 and MBD3), leading to recruitment of HDACs to gene promoters resulting in turn in the deacetylation of nearby H3K27 and H2A.Z (By similarity). Plays a role in facilitating transcriptional elongation through regulation of histone acetylation (PubMed:30228260). Negatively regulates brown adipocyte thermogenesis by interacting with and stabilizing HDAC1 at the UCP1 gene promoter, thereby promoting histone deacetylation at the promoter leading to the repression of UCP1 expression (PubMed:34180153).</text>
</comment>
<comment type="subunit">
    <text evidence="1 5">Component of a MTA1-specific subcomplex of the NuRD complex composed of PWWP2B, MTA1 and HDAC1 but does not contain CHD4 and MBD3 (By similarity). Interacts with MTA1, MTA2, MTA3, HDAC1, HDAC2, RBBP4, RBBP7, BRCC3 and ZNF516 (PubMed:34180153). Does not interact with CHD4 and MBD3 (By similarity).</text>
</comment>
<comment type="subcellular location">
    <subcellularLocation>
        <location evidence="5">Nucleus</location>
    </subcellularLocation>
</comment>
<comment type="tissue specificity">
    <text evidence="5">Expressed in the brown adipose tissue.</text>
</comment>
<comment type="induction">
    <text evidence="5">Induced in response to cold.</text>
</comment>
<comment type="PTM">
    <text evidence="5">Deubiquitinated by BRCC3; leading to its stabilization.</text>
</comment>
<keyword id="KW-0539">Nucleus</keyword>
<keyword id="KW-0597">Phosphoprotein</keyword>
<keyword id="KW-1185">Reference proteome</keyword>
<keyword id="KW-0804">Transcription</keyword>
<keyword id="KW-0805">Transcription regulation</keyword>
<dbReference type="EMBL" id="AC093363">
    <property type="status" value="NOT_ANNOTATED_CDS"/>
    <property type="molecule type" value="Genomic_DNA"/>
</dbReference>
<dbReference type="CCDS" id="CCDS52427.1"/>
<dbReference type="RefSeq" id="NP_001092106.1">
    <property type="nucleotide sequence ID" value="NM_001098636.1"/>
</dbReference>
<dbReference type="SMR" id="E9Q9M8"/>
<dbReference type="FunCoup" id="E9Q9M8">
    <property type="interactions" value="1492"/>
</dbReference>
<dbReference type="STRING" id="10090.ENSMUSP00000130888"/>
<dbReference type="iPTMnet" id="E9Q9M8"/>
<dbReference type="PhosphoSitePlus" id="E9Q9M8"/>
<dbReference type="PaxDb" id="10090-ENSMUSP00000130888"/>
<dbReference type="ProteomicsDB" id="328310"/>
<dbReference type="Antibodypedia" id="46422">
    <property type="antibodies" value="77 antibodies from 22 providers"/>
</dbReference>
<dbReference type="Ensembl" id="ENSMUST00000172136.9">
    <property type="protein sequence ID" value="ENSMUSP00000130888.2"/>
    <property type="gene ID" value="ENSMUSG00000060260.14"/>
</dbReference>
<dbReference type="GeneID" id="101631"/>
<dbReference type="KEGG" id="mmu:101631"/>
<dbReference type="UCSC" id="uc009kfo.1">
    <property type="organism name" value="mouse"/>
</dbReference>
<dbReference type="AGR" id="MGI:2142008"/>
<dbReference type="CTD" id="170394"/>
<dbReference type="MGI" id="MGI:2142008">
    <property type="gene designation" value="Pwwp2b"/>
</dbReference>
<dbReference type="VEuPathDB" id="HostDB:ENSMUSG00000060260"/>
<dbReference type="eggNOG" id="ENOG502QQ5Q">
    <property type="taxonomic scope" value="Eukaryota"/>
</dbReference>
<dbReference type="GeneTree" id="ENSGT00940000160735"/>
<dbReference type="HOGENOM" id="CLU_020678_0_0_1"/>
<dbReference type="InParanoid" id="E9Q9M8"/>
<dbReference type="OMA" id="GSIKPFC"/>
<dbReference type="OrthoDB" id="5964980at2759"/>
<dbReference type="PhylomeDB" id="E9Q9M8"/>
<dbReference type="TreeFam" id="TF331271"/>
<dbReference type="BioGRID-ORCS" id="101631">
    <property type="hits" value="3 hits in 78 CRISPR screens"/>
</dbReference>
<dbReference type="ChiTaRS" id="Pwwp2b">
    <property type="organism name" value="mouse"/>
</dbReference>
<dbReference type="PRO" id="PR:E9Q9M8"/>
<dbReference type="Proteomes" id="UP000000589">
    <property type="component" value="Chromosome 7"/>
</dbReference>
<dbReference type="RNAct" id="E9Q9M8">
    <property type="molecule type" value="protein"/>
</dbReference>
<dbReference type="Bgee" id="ENSMUSG00000060260">
    <property type="expression patterns" value="Expressed in testis and 63 other cell types or tissues"/>
</dbReference>
<dbReference type="ExpressionAtlas" id="E9Q9M8">
    <property type="expression patterns" value="baseline and differential"/>
</dbReference>
<dbReference type="GO" id="GO:0005654">
    <property type="term" value="C:nucleoplasm"/>
    <property type="evidence" value="ECO:0007669"/>
    <property type="project" value="Ensembl"/>
</dbReference>
<dbReference type="GO" id="GO:0005634">
    <property type="term" value="C:nucleus"/>
    <property type="evidence" value="ECO:0000314"/>
    <property type="project" value="UniProtKB"/>
</dbReference>
<dbReference type="GO" id="GO:0120325">
    <property type="term" value="F:NuRD complex binding"/>
    <property type="evidence" value="ECO:0000250"/>
    <property type="project" value="UniProtKB"/>
</dbReference>
<dbReference type="GO" id="GO:0006338">
    <property type="term" value="P:chromatin remodeling"/>
    <property type="evidence" value="ECO:0000315"/>
    <property type="project" value="UniProtKB"/>
</dbReference>
<dbReference type="GO" id="GO:0032968">
    <property type="term" value="P:positive regulation of transcription elongation by RNA polymerase II"/>
    <property type="evidence" value="ECO:0000315"/>
    <property type="project" value="UniProtKB"/>
</dbReference>
<dbReference type="GO" id="GO:0120161">
    <property type="term" value="P:regulation of cold-induced thermogenesis"/>
    <property type="evidence" value="ECO:0000315"/>
    <property type="project" value="UniProtKB"/>
</dbReference>
<dbReference type="CDD" id="cd20153">
    <property type="entry name" value="PWWP_PWWP2B"/>
    <property type="match status" value="1"/>
</dbReference>
<dbReference type="FunFam" id="2.30.30.140:FF:000036">
    <property type="entry name" value="PWWP domain-containing protein 2A"/>
    <property type="match status" value="1"/>
</dbReference>
<dbReference type="Gene3D" id="2.30.30.140">
    <property type="match status" value="1"/>
</dbReference>
<dbReference type="InterPro" id="IPR000313">
    <property type="entry name" value="PWWP_dom"/>
</dbReference>
<dbReference type="PANTHER" id="PTHR23068">
    <property type="entry name" value="DNA CYTOSINE-5- -METHYLTRANSFERASE 3-RELATED"/>
    <property type="match status" value="1"/>
</dbReference>
<dbReference type="PANTHER" id="PTHR23068:SF6">
    <property type="entry name" value="PWWP DOMAIN-CONTAINING PROTEIN 2B"/>
    <property type="match status" value="1"/>
</dbReference>
<dbReference type="Pfam" id="PF00855">
    <property type="entry name" value="PWWP"/>
    <property type="match status" value="1"/>
</dbReference>
<dbReference type="SMART" id="SM00293">
    <property type="entry name" value="PWWP"/>
    <property type="match status" value="1"/>
</dbReference>
<dbReference type="SUPFAM" id="SSF63748">
    <property type="entry name" value="Tudor/PWWP/MBT"/>
    <property type="match status" value="1"/>
</dbReference>
<dbReference type="PROSITE" id="PS50812">
    <property type="entry name" value="PWWP"/>
    <property type="match status" value="1"/>
</dbReference>
<protein>
    <recommendedName>
        <fullName>PWWP domain-containing protein 2B</fullName>
    </recommendedName>
</protein>
<organism>
    <name type="scientific">Mus musculus</name>
    <name type="common">Mouse</name>
    <dbReference type="NCBI Taxonomy" id="10090"/>
    <lineage>
        <taxon>Eukaryota</taxon>
        <taxon>Metazoa</taxon>
        <taxon>Chordata</taxon>
        <taxon>Craniata</taxon>
        <taxon>Vertebrata</taxon>
        <taxon>Euteleostomi</taxon>
        <taxon>Mammalia</taxon>
        <taxon>Eutheria</taxon>
        <taxon>Euarchontoglires</taxon>
        <taxon>Glires</taxon>
        <taxon>Rodentia</taxon>
        <taxon>Myomorpha</taxon>
        <taxon>Muroidea</taxon>
        <taxon>Muridae</taxon>
        <taxon>Murinae</taxon>
        <taxon>Mus</taxon>
        <taxon>Mus</taxon>
    </lineage>
</organism>
<reference key="1">
    <citation type="journal article" date="2009" name="PLoS Biol.">
        <title>Lineage-specific biology revealed by a finished genome assembly of the mouse.</title>
        <authorList>
            <person name="Church D.M."/>
            <person name="Goodstadt L."/>
            <person name="Hillier L.W."/>
            <person name="Zody M.C."/>
            <person name="Goldstein S."/>
            <person name="She X."/>
            <person name="Bult C.J."/>
            <person name="Agarwala R."/>
            <person name="Cherry J.L."/>
            <person name="DiCuccio M."/>
            <person name="Hlavina W."/>
            <person name="Kapustin Y."/>
            <person name="Meric P."/>
            <person name="Maglott D."/>
            <person name="Birtle Z."/>
            <person name="Marques A.C."/>
            <person name="Graves T."/>
            <person name="Zhou S."/>
            <person name="Teague B."/>
            <person name="Potamousis K."/>
            <person name="Churas C."/>
            <person name="Place M."/>
            <person name="Herschleb J."/>
            <person name="Runnheim R."/>
            <person name="Forrest D."/>
            <person name="Amos-Landgraf J."/>
            <person name="Schwartz D.C."/>
            <person name="Cheng Z."/>
            <person name="Lindblad-Toh K."/>
            <person name="Eichler E.E."/>
            <person name="Ponting C.P."/>
        </authorList>
    </citation>
    <scope>NUCLEOTIDE SEQUENCE [LARGE SCALE GENOMIC DNA]</scope>
    <source>
        <strain>C57BL/6J</strain>
    </source>
</reference>
<reference key="2">
    <citation type="journal article" date="2018" name="Nat. Commun.">
        <title>A variant NuRD complex containing PWWP2A/B excludes MBD2/3 to regulate transcription at active genes.</title>
        <authorList>
            <person name="Zhang T."/>
            <person name="Wei G."/>
            <person name="Millard C.J."/>
            <person name="Fischer R."/>
            <person name="Konietzny R."/>
            <person name="Kessler B.M."/>
            <person name="Schwabe J.W.R."/>
            <person name="Brockdorff N."/>
        </authorList>
    </citation>
    <scope>FUNCTION</scope>
</reference>
<reference key="3">
    <citation type="journal article" date="2021" name="Adv. Sci.">
        <title>PWWP2B Fine-Tunes Adipose Thermogenesis by Stabilizing HDACs in a NuRD Subcomplex.</title>
        <authorList>
            <person name="Yan L."/>
            <person name="Jin W."/>
            <person name="Zhao Q."/>
            <person name="Cui X."/>
            <person name="Shi T."/>
            <person name="Xu Y."/>
            <person name="Li F."/>
            <person name="Jin W."/>
            <person name="Zhang Z."/>
            <person name="Zhang Z."/>
            <person name="Tang Q.Q."/>
            <person name="Pan D."/>
        </authorList>
    </citation>
    <scope>FUNCTION</scope>
    <scope>TISSUE SPECIFICITY</scope>
    <scope>INDUCTION</scope>
    <scope>SUBCELLULAR LOCATION</scope>
    <scope>INTERACTION WITH MTA1; MTA2; MTA3; HDAC1; HDAC2; RBBP4; RBBP7; BRCC3 AND ZNF516</scope>
    <scope>DEUBIQUITINATION</scope>
</reference>